<feature type="chain" id="PRO_0000218831" description="Progestin and adipoQ receptor-like protein 1">
    <location>
        <begin position="1"/>
        <end position="434"/>
    </location>
</feature>
<feature type="topological domain" description="Cytoplasmic" evidence="2">
    <location>
        <begin position="1"/>
        <end position="201"/>
    </location>
</feature>
<feature type="transmembrane region" description="Helical; Name=1" evidence="2">
    <location>
        <begin position="202"/>
        <end position="222"/>
    </location>
</feature>
<feature type="topological domain" description="Extracellular" evidence="2">
    <location>
        <begin position="223"/>
        <end position="234"/>
    </location>
</feature>
<feature type="transmembrane region" description="Helical; Name=2" evidence="2">
    <location>
        <begin position="235"/>
        <end position="255"/>
    </location>
</feature>
<feature type="topological domain" description="Cytoplasmic" evidence="2">
    <location>
        <begin position="256"/>
        <end position="273"/>
    </location>
</feature>
<feature type="transmembrane region" description="Helical; Name=3" evidence="2">
    <location>
        <begin position="274"/>
        <end position="294"/>
    </location>
</feature>
<feature type="topological domain" description="Extracellular" evidence="2">
    <location>
        <begin position="295"/>
        <end position="299"/>
    </location>
</feature>
<feature type="transmembrane region" description="Helical; Name=4" evidence="2">
    <location>
        <begin position="300"/>
        <end position="320"/>
    </location>
</feature>
<feature type="topological domain" description="Cytoplasmic" evidence="2">
    <location>
        <begin position="321"/>
        <end position="331"/>
    </location>
</feature>
<feature type="transmembrane region" description="Helical; Name=5" evidence="2">
    <location>
        <begin position="332"/>
        <end position="352"/>
    </location>
</feature>
<feature type="topological domain" description="Extracellular" evidence="2">
    <location>
        <begin position="353"/>
        <end position="362"/>
    </location>
</feature>
<feature type="transmembrane region" description="Helical; Name=6" evidence="2">
    <location>
        <begin position="363"/>
        <end position="383"/>
    </location>
</feature>
<feature type="topological domain" description="Cytoplasmic" evidence="2">
    <location>
        <begin position="384"/>
        <end position="403"/>
    </location>
</feature>
<feature type="transmembrane region" description="Helical; Name=7" evidence="2">
    <location>
        <begin position="404"/>
        <end position="424"/>
    </location>
</feature>
<feature type="topological domain" description="Extracellular" evidence="2">
    <location>
        <begin position="425"/>
        <end position="434"/>
    </location>
</feature>
<feature type="region of interest" description="Disordered" evidence="3">
    <location>
        <begin position="74"/>
        <end position="103"/>
    </location>
</feature>
<feature type="region of interest" description="Disordered" evidence="3">
    <location>
        <begin position="118"/>
        <end position="137"/>
    </location>
</feature>
<dbReference type="EMBL" id="FO080265">
    <property type="protein sequence ID" value="CCD62451.1"/>
    <property type="molecule type" value="Genomic_DNA"/>
</dbReference>
<dbReference type="PIR" id="D88710">
    <property type="entry name" value="D88710"/>
</dbReference>
<dbReference type="RefSeq" id="NP_001367391.1">
    <property type="nucleotide sequence ID" value="NM_001380277.2"/>
</dbReference>
<dbReference type="RefSeq" id="NP_500998.1">
    <property type="nucleotide sequence ID" value="NM_068597.5"/>
</dbReference>
<dbReference type="SMR" id="Q94177"/>
<dbReference type="BioGRID" id="42537">
    <property type="interactions" value="1"/>
</dbReference>
<dbReference type="FunCoup" id="Q94177">
    <property type="interactions" value="2494"/>
</dbReference>
<dbReference type="STRING" id="6239.C43G2.1c.1"/>
<dbReference type="iPTMnet" id="Q94177"/>
<dbReference type="PaxDb" id="6239-C43G2.1.1"/>
<dbReference type="PeptideAtlas" id="Q94177"/>
<dbReference type="EnsemblMetazoa" id="C43G2.1a.1">
    <property type="protein sequence ID" value="C43G2.1a.1"/>
    <property type="gene ID" value="WBGene00016610"/>
</dbReference>
<dbReference type="GeneID" id="177416"/>
<dbReference type="UCSC" id="C43G2.1.1">
    <property type="organism name" value="c. elegans"/>
</dbReference>
<dbReference type="AGR" id="WB:WBGene00016610"/>
<dbReference type="WormBase" id="C43G2.1a">
    <property type="protein sequence ID" value="CE27848"/>
    <property type="gene ID" value="WBGene00016610"/>
    <property type="gene designation" value="paqr-1"/>
</dbReference>
<dbReference type="eggNOG" id="KOG0748">
    <property type="taxonomic scope" value="Eukaryota"/>
</dbReference>
<dbReference type="InParanoid" id="Q94177"/>
<dbReference type="OMA" id="IGNACDY"/>
<dbReference type="PhylomeDB" id="Q94177"/>
<dbReference type="PRO" id="PR:Q94177"/>
<dbReference type="Proteomes" id="UP000001940">
    <property type="component" value="Chromosome IV"/>
</dbReference>
<dbReference type="Bgee" id="WBGene00016610">
    <property type="expression patterns" value="Expressed in germ line (C elegans) and 4 other cell types or tissues"/>
</dbReference>
<dbReference type="ExpressionAtlas" id="Q94177">
    <property type="expression patterns" value="baseline and differential"/>
</dbReference>
<dbReference type="GO" id="GO:0005886">
    <property type="term" value="C:plasma membrane"/>
    <property type="evidence" value="ECO:0000318"/>
    <property type="project" value="GO_Central"/>
</dbReference>
<dbReference type="GO" id="GO:0038023">
    <property type="term" value="F:signaling receptor activity"/>
    <property type="evidence" value="ECO:0000318"/>
    <property type="project" value="GO_Central"/>
</dbReference>
<dbReference type="GO" id="GO:0033211">
    <property type="term" value="P:adiponectin-activated signaling pathway"/>
    <property type="evidence" value="ECO:0000318"/>
    <property type="project" value="GO_Central"/>
</dbReference>
<dbReference type="GO" id="GO:0019395">
    <property type="term" value="P:fatty acid oxidation"/>
    <property type="evidence" value="ECO:0000250"/>
    <property type="project" value="UniProtKB"/>
</dbReference>
<dbReference type="GO" id="GO:0009755">
    <property type="term" value="P:hormone-mediated signaling pathway"/>
    <property type="evidence" value="ECO:0000250"/>
    <property type="project" value="UniProtKB"/>
</dbReference>
<dbReference type="GO" id="GO:0046321">
    <property type="term" value="P:positive regulation of fatty acid oxidation"/>
    <property type="evidence" value="ECO:0000316"/>
    <property type="project" value="WormBase"/>
</dbReference>
<dbReference type="InterPro" id="IPR004254">
    <property type="entry name" value="AdipoR/HlyIII-related"/>
</dbReference>
<dbReference type="InterPro" id="IPR001610">
    <property type="entry name" value="PAC"/>
</dbReference>
<dbReference type="PANTHER" id="PTHR20855">
    <property type="entry name" value="ADIPOR/PROGESTIN RECEPTOR-RELATED"/>
    <property type="match status" value="1"/>
</dbReference>
<dbReference type="PANTHER" id="PTHR20855:SF127">
    <property type="entry name" value="PROGESTIN AND ADIPOQ RECEPTOR-LIKE PROTEIN 1"/>
    <property type="match status" value="1"/>
</dbReference>
<dbReference type="Pfam" id="PF03006">
    <property type="entry name" value="HlyIII"/>
    <property type="match status" value="1"/>
</dbReference>
<dbReference type="SMART" id="SM00086">
    <property type="entry name" value="PAC"/>
    <property type="match status" value="1"/>
</dbReference>
<gene>
    <name type="primary">paqr-1</name>
    <name type="ORF">C43G2.1</name>
</gene>
<accession>Q94177</accession>
<comment type="function">
    <text evidence="1">Probable receptor, which may be involved in metabolic pathways that regulate lipid metabolism such as fatty acid oxidation.</text>
</comment>
<comment type="subcellular location">
    <subcellularLocation>
        <location evidence="4">Membrane</location>
        <topology evidence="4">Multi-pass membrane protein</topology>
    </subcellularLocation>
</comment>
<comment type="similarity">
    <text evidence="4">Belongs to the ADIPOR family.</text>
</comment>
<name>ADRL_CAEEL</name>
<proteinExistence type="inferred from homology"/>
<organism>
    <name type="scientific">Caenorhabditis elegans</name>
    <dbReference type="NCBI Taxonomy" id="6239"/>
    <lineage>
        <taxon>Eukaryota</taxon>
        <taxon>Metazoa</taxon>
        <taxon>Ecdysozoa</taxon>
        <taxon>Nematoda</taxon>
        <taxon>Chromadorea</taxon>
        <taxon>Rhabditida</taxon>
        <taxon>Rhabditina</taxon>
        <taxon>Rhabditomorpha</taxon>
        <taxon>Rhabditoidea</taxon>
        <taxon>Rhabditidae</taxon>
        <taxon>Peloderinae</taxon>
        <taxon>Caenorhabditis</taxon>
    </lineage>
</organism>
<protein>
    <recommendedName>
        <fullName>Progestin and adipoQ receptor-like protein 1</fullName>
    </recommendedName>
</protein>
<sequence>MNPDEVNRALGHYLNDADSGELVVEDSTTVQVKNPEARKTGDKIEVFYSRKTTVVSPTNSDDEDADFCSDSELLPQQEGHRSRATSFAGRIRAGSDDEAMPKHTILRYRRKKGGQWREINLQGTPDKRKDDEDELEVDVKEDRSEQTGIVTKTYEARWKVLKYEHLPEWLQDNEFLRHGHRPPLPSFSECFKSIWSLHTETGNIWTHLIGCVAFFFLACWFLTRPDNHIQFQEKVVFSFFFAGAVLCLGLSFAFHTLSCHSVNVVKIFCKLDYMGISLLIIGSFIPWIYYGFYCRREPKITYIAMVSVLGIGAIVVSLWDKFSESRFRPIRAAVFVGMGCSGVIPTIHYIITDGVHSLFADNSFHWLLLMAFLYLLGAGLYATRTPERFFPGKCDIWFQSHQLFHTCVVIAAFVHYYGISEMAFARLNEQCPVR</sequence>
<reference key="1">
    <citation type="journal article" date="1998" name="Science">
        <title>Genome sequence of the nematode C. elegans: a platform for investigating biology.</title>
        <authorList>
            <consortium name="The C. elegans sequencing consortium"/>
        </authorList>
    </citation>
    <scope>NUCLEOTIDE SEQUENCE [LARGE SCALE GENOMIC DNA]</scope>
    <source>
        <strain>Bristol N2</strain>
    </source>
</reference>
<evidence type="ECO:0000250" key="1"/>
<evidence type="ECO:0000255" key="2"/>
<evidence type="ECO:0000256" key="3">
    <source>
        <dbReference type="SAM" id="MobiDB-lite"/>
    </source>
</evidence>
<evidence type="ECO:0000305" key="4"/>
<keyword id="KW-0276">Fatty acid metabolism</keyword>
<keyword id="KW-0443">Lipid metabolism</keyword>
<keyword id="KW-0472">Membrane</keyword>
<keyword id="KW-0675">Receptor</keyword>
<keyword id="KW-1185">Reference proteome</keyword>
<keyword id="KW-0812">Transmembrane</keyword>
<keyword id="KW-1133">Transmembrane helix</keyword>